<reference key="1">
    <citation type="journal article" date="2009" name="J. Bacteriol.">
        <title>Genome sequences of three Agrobacterium biovars help elucidate the evolution of multichromosome genomes in bacteria.</title>
        <authorList>
            <person name="Slater S.C."/>
            <person name="Goldman B.S."/>
            <person name="Goodner B."/>
            <person name="Setubal J.C."/>
            <person name="Farrand S.K."/>
            <person name="Nester E.W."/>
            <person name="Burr T.J."/>
            <person name="Banta L."/>
            <person name="Dickerman A.W."/>
            <person name="Paulsen I."/>
            <person name="Otten L."/>
            <person name="Suen G."/>
            <person name="Welch R."/>
            <person name="Almeida N.F."/>
            <person name="Arnold F."/>
            <person name="Burton O.T."/>
            <person name="Du Z."/>
            <person name="Ewing A."/>
            <person name="Godsy E."/>
            <person name="Heisel S."/>
            <person name="Houmiel K.L."/>
            <person name="Jhaveri J."/>
            <person name="Lu J."/>
            <person name="Miller N.M."/>
            <person name="Norton S."/>
            <person name="Chen Q."/>
            <person name="Phoolcharoen W."/>
            <person name="Ohlin V."/>
            <person name="Ondrusek D."/>
            <person name="Pride N."/>
            <person name="Stricklin S.L."/>
            <person name="Sun J."/>
            <person name="Wheeler C."/>
            <person name="Wilson L."/>
            <person name="Zhu H."/>
            <person name="Wood D.W."/>
        </authorList>
    </citation>
    <scope>NUCLEOTIDE SEQUENCE [LARGE SCALE GENOMIC DNA]</scope>
    <source>
        <strain>K84 / ATCC BAA-868</strain>
    </source>
</reference>
<sequence length="57" mass="6097">MLKWAIIFFVISLIAGFFGFSGVSAATATIARVLFAIFLIVFLVFLILAVMAGNAVL</sequence>
<feature type="chain" id="PRO_1000166685" description="UPF0391 membrane protein Arad_3976">
    <location>
        <begin position="1"/>
        <end position="57"/>
    </location>
</feature>
<feature type="transmembrane region" description="Helical" evidence="1">
    <location>
        <begin position="4"/>
        <end position="24"/>
    </location>
</feature>
<feature type="transmembrane region" description="Helical" evidence="1">
    <location>
        <begin position="33"/>
        <end position="53"/>
    </location>
</feature>
<dbReference type="EMBL" id="CP000628">
    <property type="protein sequence ID" value="ACM27794.1"/>
    <property type="molecule type" value="Genomic_DNA"/>
</dbReference>
<dbReference type="RefSeq" id="WP_007700677.1">
    <property type="nucleotide sequence ID" value="NC_011985.1"/>
</dbReference>
<dbReference type="KEGG" id="ara:Arad_3976"/>
<dbReference type="eggNOG" id="COG5487">
    <property type="taxonomic scope" value="Bacteria"/>
</dbReference>
<dbReference type="HOGENOM" id="CLU_187346_1_1_5"/>
<dbReference type="Proteomes" id="UP000001600">
    <property type="component" value="Chromosome 1"/>
</dbReference>
<dbReference type="GO" id="GO:0005886">
    <property type="term" value="C:plasma membrane"/>
    <property type="evidence" value="ECO:0007669"/>
    <property type="project" value="UniProtKB-SubCell"/>
</dbReference>
<dbReference type="HAMAP" id="MF_01361">
    <property type="entry name" value="UPF0391"/>
    <property type="match status" value="1"/>
</dbReference>
<dbReference type="InterPro" id="IPR009760">
    <property type="entry name" value="DUF1328"/>
</dbReference>
<dbReference type="NCBIfam" id="NF010234">
    <property type="entry name" value="PRK13682.2-5"/>
    <property type="match status" value="1"/>
</dbReference>
<dbReference type="Pfam" id="PF07043">
    <property type="entry name" value="DUF1328"/>
    <property type="match status" value="1"/>
</dbReference>
<dbReference type="PIRSF" id="PIRSF036466">
    <property type="entry name" value="UCP036466"/>
    <property type="match status" value="1"/>
</dbReference>
<proteinExistence type="inferred from homology"/>
<organism>
    <name type="scientific">Rhizobium rhizogenes (strain K84 / ATCC BAA-868)</name>
    <name type="common">Agrobacterium radiobacter</name>
    <dbReference type="NCBI Taxonomy" id="311403"/>
    <lineage>
        <taxon>Bacteria</taxon>
        <taxon>Pseudomonadati</taxon>
        <taxon>Pseudomonadota</taxon>
        <taxon>Alphaproteobacteria</taxon>
        <taxon>Hyphomicrobiales</taxon>
        <taxon>Rhizobiaceae</taxon>
        <taxon>Rhizobium/Agrobacterium group</taxon>
        <taxon>Rhizobium</taxon>
    </lineage>
</organism>
<evidence type="ECO:0000255" key="1">
    <source>
        <dbReference type="HAMAP-Rule" id="MF_01361"/>
    </source>
</evidence>
<accession>B9JAH9</accession>
<comment type="subcellular location">
    <subcellularLocation>
        <location evidence="1">Cell membrane</location>
        <topology evidence="1">Multi-pass membrane protein</topology>
    </subcellularLocation>
</comment>
<comment type="similarity">
    <text evidence="1">Belongs to the UPF0391 family.</text>
</comment>
<protein>
    <recommendedName>
        <fullName evidence="1">UPF0391 membrane protein Arad_3976</fullName>
    </recommendedName>
</protein>
<gene>
    <name type="ordered locus">Arad_3976</name>
</gene>
<name>Y3976_RHIR8</name>
<keyword id="KW-1003">Cell membrane</keyword>
<keyword id="KW-0472">Membrane</keyword>
<keyword id="KW-0812">Transmembrane</keyword>
<keyword id="KW-1133">Transmembrane helix</keyword>